<accession>Q6NAZ1</accession>
<keyword id="KW-0067">ATP-binding</keyword>
<keyword id="KW-0414">Isoprene biosynthesis</keyword>
<keyword id="KW-0418">Kinase</keyword>
<keyword id="KW-0547">Nucleotide-binding</keyword>
<keyword id="KW-0808">Transferase</keyword>
<proteinExistence type="inferred from homology"/>
<sequence length="299" mass="30418">MTDGSAMTLRDEARAKVNLTLRVVGRRPDGYHELESVVAFADCADHLTLQPGAALSLTTIGPGAQDCGDSADNLVLKAARLLGERVPDLTTGAFTLDKHLPVAAGIGGGSADAAAALRLLARANDLAVDDPRLIEAARLTGADVPVCLPSKPCVMTGVGEKLSPLPLPRIPAVMVNPRVPVATKDVFTALGLKPGSLAVGATDVLAAPAWPEAGAPLADWVVALEAGTNDLEPPALKVEPVVGTVLEALRATAGVQLARMSGSGATCFALYADDASARAAADALCAAHPGWWVHAGSLS</sequence>
<feature type="chain" id="PRO_0000189256" description="4-diphosphocytidyl-2-C-methyl-D-erythritol kinase">
    <location>
        <begin position="1"/>
        <end position="299"/>
    </location>
</feature>
<feature type="active site" evidence="1">
    <location>
        <position position="16"/>
    </location>
</feature>
<feature type="active site" evidence="1">
    <location>
        <position position="143"/>
    </location>
</feature>
<feature type="binding site" evidence="1">
    <location>
        <begin position="101"/>
        <end position="111"/>
    </location>
    <ligand>
        <name>ATP</name>
        <dbReference type="ChEBI" id="CHEBI:30616"/>
    </ligand>
</feature>
<organism>
    <name type="scientific">Rhodopseudomonas palustris (strain ATCC BAA-98 / CGA009)</name>
    <dbReference type="NCBI Taxonomy" id="258594"/>
    <lineage>
        <taxon>Bacteria</taxon>
        <taxon>Pseudomonadati</taxon>
        <taxon>Pseudomonadota</taxon>
        <taxon>Alphaproteobacteria</taxon>
        <taxon>Hyphomicrobiales</taxon>
        <taxon>Nitrobacteraceae</taxon>
        <taxon>Rhodopseudomonas</taxon>
    </lineage>
</organism>
<name>ISPE_RHOPA</name>
<reference key="1">
    <citation type="journal article" date="2004" name="Nat. Biotechnol.">
        <title>Complete genome sequence of the metabolically versatile photosynthetic bacterium Rhodopseudomonas palustris.</title>
        <authorList>
            <person name="Larimer F.W."/>
            <person name="Chain P."/>
            <person name="Hauser L."/>
            <person name="Lamerdin J.E."/>
            <person name="Malfatti S."/>
            <person name="Do L."/>
            <person name="Land M.L."/>
            <person name="Pelletier D.A."/>
            <person name="Beatty J.T."/>
            <person name="Lang A.S."/>
            <person name="Tabita F.R."/>
            <person name="Gibson J.L."/>
            <person name="Hanson T.E."/>
            <person name="Bobst C."/>
            <person name="Torres y Torres J.L."/>
            <person name="Peres C."/>
            <person name="Harrison F.H."/>
            <person name="Gibson J."/>
            <person name="Harwood C.S."/>
        </authorList>
    </citation>
    <scope>NUCLEOTIDE SEQUENCE [LARGE SCALE GENOMIC DNA]</scope>
    <source>
        <strain>ATCC BAA-98 / CGA009</strain>
    </source>
</reference>
<gene>
    <name evidence="1" type="primary">ispE</name>
    <name type="ordered locus">RPA1039</name>
</gene>
<protein>
    <recommendedName>
        <fullName evidence="1">4-diphosphocytidyl-2-C-methyl-D-erythritol kinase</fullName>
        <shortName evidence="1">CMK</shortName>
        <ecNumber evidence="1">2.7.1.148</ecNumber>
    </recommendedName>
    <alternativeName>
        <fullName evidence="1">4-(cytidine-5'-diphospho)-2-C-methyl-D-erythritol kinase</fullName>
    </alternativeName>
</protein>
<evidence type="ECO:0000255" key="1">
    <source>
        <dbReference type="HAMAP-Rule" id="MF_00061"/>
    </source>
</evidence>
<dbReference type="EC" id="2.7.1.148" evidence="1"/>
<dbReference type="EMBL" id="BX572596">
    <property type="protein sequence ID" value="CAE26482.1"/>
    <property type="molecule type" value="Genomic_DNA"/>
</dbReference>
<dbReference type="SMR" id="Q6NAZ1"/>
<dbReference type="STRING" id="258594.RPA1039"/>
<dbReference type="eggNOG" id="COG1947">
    <property type="taxonomic scope" value="Bacteria"/>
</dbReference>
<dbReference type="HOGENOM" id="CLU_053057_1_0_5"/>
<dbReference type="PhylomeDB" id="Q6NAZ1"/>
<dbReference type="UniPathway" id="UPA00056">
    <property type="reaction ID" value="UER00094"/>
</dbReference>
<dbReference type="GO" id="GO:0050515">
    <property type="term" value="F:4-(cytidine 5'-diphospho)-2-C-methyl-D-erythritol kinase activity"/>
    <property type="evidence" value="ECO:0007669"/>
    <property type="project" value="UniProtKB-UniRule"/>
</dbReference>
<dbReference type="GO" id="GO:0005524">
    <property type="term" value="F:ATP binding"/>
    <property type="evidence" value="ECO:0007669"/>
    <property type="project" value="UniProtKB-UniRule"/>
</dbReference>
<dbReference type="GO" id="GO:0019288">
    <property type="term" value="P:isopentenyl diphosphate biosynthetic process, methylerythritol 4-phosphate pathway"/>
    <property type="evidence" value="ECO:0007669"/>
    <property type="project" value="UniProtKB-UniRule"/>
</dbReference>
<dbReference type="GO" id="GO:0016114">
    <property type="term" value="P:terpenoid biosynthetic process"/>
    <property type="evidence" value="ECO:0007669"/>
    <property type="project" value="InterPro"/>
</dbReference>
<dbReference type="Gene3D" id="3.30.230.10">
    <property type="match status" value="1"/>
</dbReference>
<dbReference type="Gene3D" id="3.30.70.890">
    <property type="entry name" value="GHMP kinase, C-terminal domain"/>
    <property type="match status" value="1"/>
</dbReference>
<dbReference type="HAMAP" id="MF_00061">
    <property type="entry name" value="IspE"/>
    <property type="match status" value="1"/>
</dbReference>
<dbReference type="InterPro" id="IPR013750">
    <property type="entry name" value="GHMP_kinase_C_dom"/>
</dbReference>
<dbReference type="InterPro" id="IPR036554">
    <property type="entry name" value="GHMP_kinase_C_sf"/>
</dbReference>
<dbReference type="InterPro" id="IPR006204">
    <property type="entry name" value="GHMP_kinase_N_dom"/>
</dbReference>
<dbReference type="InterPro" id="IPR004424">
    <property type="entry name" value="IspE"/>
</dbReference>
<dbReference type="InterPro" id="IPR020568">
    <property type="entry name" value="Ribosomal_Su5_D2-typ_SF"/>
</dbReference>
<dbReference type="InterPro" id="IPR014721">
    <property type="entry name" value="Ribsml_uS5_D2-typ_fold_subgr"/>
</dbReference>
<dbReference type="NCBIfam" id="TIGR00154">
    <property type="entry name" value="ispE"/>
    <property type="match status" value="1"/>
</dbReference>
<dbReference type="NCBIfam" id="NF011202">
    <property type="entry name" value="PRK14608.1"/>
    <property type="match status" value="1"/>
</dbReference>
<dbReference type="PANTHER" id="PTHR43527">
    <property type="entry name" value="4-DIPHOSPHOCYTIDYL-2-C-METHYL-D-ERYTHRITOL KINASE, CHLOROPLASTIC"/>
    <property type="match status" value="1"/>
</dbReference>
<dbReference type="PANTHER" id="PTHR43527:SF2">
    <property type="entry name" value="4-DIPHOSPHOCYTIDYL-2-C-METHYL-D-ERYTHRITOL KINASE, CHLOROPLASTIC"/>
    <property type="match status" value="1"/>
</dbReference>
<dbReference type="Pfam" id="PF08544">
    <property type="entry name" value="GHMP_kinases_C"/>
    <property type="match status" value="1"/>
</dbReference>
<dbReference type="Pfam" id="PF00288">
    <property type="entry name" value="GHMP_kinases_N"/>
    <property type="match status" value="1"/>
</dbReference>
<dbReference type="PIRSF" id="PIRSF010376">
    <property type="entry name" value="IspE"/>
    <property type="match status" value="1"/>
</dbReference>
<dbReference type="SUPFAM" id="SSF55060">
    <property type="entry name" value="GHMP Kinase, C-terminal domain"/>
    <property type="match status" value="1"/>
</dbReference>
<dbReference type="SUPFAM" id="SSF54211">
    <property type="entry name" value="Ribosomal protein S5 domain 2-like"/>
    <property type="match status" value="1"/>
</dbReference>
<comment type="function">
    <text evidence="1">Catalyzes the phosphorylation of the position 2 hydroxy group of 4-diphosphocytidyl-2C-methyl-D-erythritol.</text>
</comment>
<comment type="catalytic activity">
    <reaction evidence="1">
        <text>4-CDP-2-C-methyl-D-erythritol + ATP = 4-CDP-2-C-methyl-D-erythritol 2-phosphate + ADP + H(+)</text>
        <dbReference type="Rhea" id="RHEA:18437"/>
        <dbReference type="ChEBI" id="CHEBI:15378"/>
        <dbReference type="ChEBI" id="CHEBI:30616"/>
        <dbReference type="ChEBI" id="CHEBI:57823"/>
        <dbReference type="ChEBI" id="CHEBI:57919"/>
        <dbReference type="ChEBI" id="CHEBI:456216"/>
        <dbReference type="EC" id="2.7.1.148"/>
    </reaction>
</comment>
<comment type="pathway">
    <text evidence="1">Isoprenoid biosynthesis; isopentenyl diphosphate biosynthesis via DXP pathway; isopentenyl diphosphate from 1-deoxy-D-xylulose 5-phosphate: step 3/6.</text>
</comment>
<comment type="similarity">
    <text evidence="1">Belongs to the GHMP kinase family. IspE subfamily.</text>
</comment>